<accession>B1VDQ2</accession>
<protein>
    <recommendedName>
        <fullName evidence="1">Probable cell division protein WhiA</fullName>
    </recommendedName>
</protein>
<proteinExistence type="inferred from homology"/>
<evidence type="ECO:0000255" key="1">
    <source>
        <dbReference type="HAMAP-Rule" id="MF_01420"/>
    </source>
</evidence>
<comment type="function">
    <text evidence="1">Involved in cell division and chromosome segregation.</text>
</comment>
<comment type="similarity">
    <text evidence="1">Belongs to the WhiA family.</text>
</comment>
<dbReference type="EMBL" id="AM942444">
    <property type="protein sequence ID" value="CAQ04950.1"/>
    <property type="molecule type" value="Genomic_DNA"/>
</dbReference>
<dbReference type="RefSeq" id="WP_012360238.1">
    <property type="nucleotide sequence ID" value="NC_010545.1"/>
</dbReference>
<dbReference type="SMR" id="B1VDQ2"/>
<dbReference type="STRING" id="504474.cu0990"/>
<dbReference type="GeneID" id="60603768"/>
<dbReference type="KEGG" id="cur:cu0990"/>
<dbReference type="eggNOG" id="COG1481">
    <property type="taxonomic scope" value="Bacteria"/>
</dbReference>
<dbReference type="HOGENOM" id="CLU_053282_0_0_11"/>
<dbReference type="Proteomes" id="UP000001727">
    <property type="component" value="Chromosome"/>
</dbReference>
<dbReference type="GO" id="GO:0003677">
    <property type="term" value="F:DNA binding"/>
    <property type="evidence" value="ECO:0007669"/>
    <property type="project" value="UniProtKB-UniRule"/>
</dbReference>
<dbReference type="GO" id="GO:0051301">
    <property type="term" value="P:cell division"/>
    <property type="evidence" value="ECO:0007669"/>
    <property type="project" value="UniProtKB-UniRule"/>
</dbReference>
<dbReference type="GO" id="GO:0043937">
    <property type="term" value="P:regulation of sporulation"/>
    <property type="evidence" value="ECO:0007669"/>
    <property type="project" value="InterPro"/>
</dbReference>
<dbReference type="FunFam" id="3.10.28.10:FF:000001">
    <property type="entry name" value="Probable cell division protein WhiA"/>
    <property type="match status" value="1"/>
</dbReference>
<dbReference type="Gene3D" id="3.10.28.10">
    <property type="entry name" value="Homing endonucleases"/>
    <property type="match status" value="1"/>
</dbReference>
<dbReference type="HAMAP" id="MF_01420">
    <property type="entry name" value="HTH_type_WhiA"/>
    <property type="match status" value="1"/>
</dbReference>
<dbReference type="InterPro" id="IPR027434">
    <property type="entry name" value="Homing_endonucl"/>
</dbReference>
<dbReference type="InterPro" id="IPR018478">
    <property type="entry name" value="Sporu_reg_WhiA_N_dom"/>
</dbReference>
<dbReference type="InterPro" id="IPR003802">
    <property type="entry name" value="Sporulation_regulator_WhiA"/>
</dbReference>
<dbReference type="InterPro" id="IPR023054">
    <property type="entry name" value="Sporulation_regulator_WhiA_C"/>
</dbReference>
<dbReference type="InterPro" id="IPR039518">
    <property type="entry name" value="WhiA_LAGLIDADG_dom"/>
</dbReference>
<dbReference type="NCBIfam" id="TIGR00647">
    <property type="entry name" value="DNA_bind_WhiA"/>
    <property type="match status" value="1"/>
</dbReference>
<dbReference type="PANTHER" id="PTHR37307">
    <property type="entry name" value="CELL DIVISION PROTEIN WHIA-RELATED"/>
    <property type="match status" value="1"/>
</dbReference>
<dbReference type="PANTHER" id="PTHR37307:SF1">
    <property type="entry name" value="CELL DIVISION PROTEIN WHIA-RELATED"/>
    <property type="match status" value="1"/>
</dbReference>
<dbReference type="Pfam" id="PF02650">
    <property type="entry name" value="HTH_WhiA"/>
    <property type="match status" value="1"/>
</dbReference>
<dbReference type="Pfam" id="PF14527">
    <property type="entry name" value="LAGLIDADG_WhiA"/>
    <property type="match status" value="1"/>
</dbReference>
<dbReference type="Pfam" id="PF10298">
    <property type="entry name" value="WhiA_N"/>
    <property type="match status" value="1"/>
</dbReference>
<reference key="1">
    <citation type="journal article" date="2008" name="J. Biotechnol.">
        <title>The lifestyle of Corynebacterium urealyticum derived from its complete genome sequence established by pyrosequencing.</title>
        <authorList>
            <person name="Tauch A."/>
            <person name="Trost E."/>
            <person name="Tilker A."/>
            <person name="Ludewig U."/>
            <person name="Schneiker S."/>
            <person name="Goesmann A."/>
            <person name="Arnold W."/>
            <person name="Bekel T."/>
            <person name="Brinkrolf K."/>
            <person name="Brune I."/>
            <person name="Goetker S."/>
            <person name="Kalinowski J."/>
            <person name="Kamp P.-B."/>
            <person name="Lobo F.P."/>
            <person name="Viehoever P."/>
            <person name="Weisshaar B."/>
            <person name="Soriano F."/>
            <person name="Droege M."/>
            <person name="Puehler A."/>
        </authorList>
    </citation>
    <scope>NUCLEOTIDE SEQUENCE [LARGE SCALE GENOMIC DNA]</scope>
    <source>
        <strain>ATCC 43042 / DSM 7109</strain>
    </source>
</reference>
<name>WHIA_CORU7</name>
<keyword id="KW-0131">Cell cycle</keyword>
<keyword id="KW-0132">Cell division</keyword>
<keyword id="KW-0238">DNA-binding</keyword>
<keyword id="KW-1185">Reference proteome</keyword>
<organism>
    <name type="scientific">Corynebacterium urealyticum (strain ATCC 43042 / DSM 7109)</name>
    <dbReference type="NCBI Taxonomy" id="504474"/>
    <lineage>
        <taxon>Bacteria</taxon>
        <taxon>Bacillati</taxon>
        <taxon>Actinomycetota</taxon>
        <taxon>Actinomycetes</taxon>
        <taxon>Mycobacteriales</taxon>
        <taxon>Corynebacteriaceae</taxon>
        <taxon>Corynebacterium</taxon>
    </lineage>
</organism>
<gene>
    <name evidence="1" type="primary">whiA</name>
    <name type="ordered locus">cu0990</name>
</gene>
<feature type="chain" id="PRO_0000376477" description="Probable cell division protein WhiA">
    <location>
        <begin position="1"/>
        <end position="328"/>
    </location>
</feature>
<feature type="DNA-binding region" description="H-T-H motif" evidence="1">
    <location>
        <begin position="275"/>
        <end position="308"/>
    </location>
</feature>
<sequence>MALTADVKDEIARVSVVRAEDMNAEVAALLRYSGALHLVAGQIVVESEVDSSATARRLMEFVEQLYHHEAQLQIIGAGNLRKSARYIVKWIKGGTEIARRTGLIDRAGRPVQGLPRTIIGGPKSACVAAWRGAFLARGTLTEPGRSCALEVATPSNEAALALVGAGRRIGVTAKTRETRGVHRVVVKDAESISALLTLMGAQATRLVWEERRMRREVRATANRLANFDDANLRRSARAAVAAAARADRALEILGEDVPTHLAEAGQLRVKHRQASLEELGQLASPPMTKDAVAGRIRRLLSMADKRAEELDIPDTHAAVTEDLFQDVE</sequence>